<reference key="1">
    <citation type="submission" date="2007-02" db="EMBL/GenBank/DDBJ databases">
        <title>Complete sequence of chromosome of Yersinia pestis Pestoides F.</title>
        <authorList>
            <consortium name="US DOE Joint Genome Institute"/>
            <person name="Copeland A."/>
            <person name="Lucas S."/>
            <person name="Lapidus A."/>
            <person name="Barry K."/>
            <person name="Detter J.C."/>
            <person name="Glavina del Rio T."/>
            <person name="Hammon N."/>
            <person name="Israni S."/>
            <person name="Dalin E."/>
            <person name="Tice H."/>
            <person name="Pitluck S."/>
            <person name="Di Bartolo G."/>
            <person name="Chain P."/>
            <person name="Malfatti S."/>
            <person name="Shin M."/>
            <person name="Vergez L."/>
            <person name="Schmutz J."/>
            <person name="Larimer F."/>
            <person name="Land M."/>
            <person name="Hauser L."/>
            <person name="Worsham P."/>
            <person name="Chu M."/>
            <person name="Bearden S."/>
            <person name="Garcia E."/>
            <person name="Richardson P."/>
        </authorList>
    </citation>
    <scope>NUCLEOTIDE SEQUENCE [LARGE SCALE GENOMIC DNA]</scope>
    <source>
        <strain>Pestoides F</strain>
    </source>
</reference>
<name>BETA_YERPP</name>
<proteinExistence type="inferred from homology"/>
<organism>
    <name type="scientific">Yersinia pestis (strain Pestoides F)</name>
    <dbReference type="NCBI Taxonomy" id="386656"/>
    <lineage>
        <taxon>Bacteria</taxon>
        <taxon>Pseudomonadati</taxon>
        <taxon>Pseudomonadota</taxon>
        <taxon>Gammaproteobacteria</taxon>
        <taxon>Enterobacterales</taxon>
        <taxon>Yersiniaceae</taxon>
        <taxon>Yersinia</taxon>
    </lineage>
</organism>
<evidence type="ECO:0000255" key="1">
    <source>
        <dbReference type="HAMAP-Rule" id="MF_00750"/>
    </source>
</evidence>
<protein>
    <recommendedName>
        <fullName evidence="1">Oxygen-dependent choline dehydrogenase</fullName>
        <shortName evidence="1">CDH</shortName>
        <shortName evidence="1">CHD</shortName>
        <ecNumber evidence="1">1.1.99.1</ecNumber>
    </recommendedName>
    <alternativeName>
        <fullName evidence="1">Betaine aldehyde dehydrogenase</fullName>
        <shortName evidence="1">BADH</shortName>
        <ecNumber evidence="1">1.2.1.8</ecNumber>
    </alternativeName>
</protein>
<accession>A4TNP2</accession>
<keyword id="KW-0274">FAD</keyword>
<keyword id="KW-0285">Flavoprotein</keyword>
<keyword id="KW-0520">NAD</keyword>
<keyword id="KW-0560">Oxidoreductase</keyword>
<gene>
    <name evidence="1" type="primary">betA</name>
    <name type="ordered locus">YPDSF_2532</name>
</gene>
<dbReference type="EC" id="1.1.99.1" evidence="1"/>
<dbReference type="EC" id="1.2.1.8" evidence="1"/>
<dbReference type="EMBL" id="CP000668">
    <property type="protein sequence ID" value="ABP40904.1"/>
    <property type="molecule type" value="Genomic_DNA"/>
</dbReference>
<dbReference type="RefSeq" id="WP_011906357.1">
    <property type="nucleotide sequence ID" value="NZ_CP009715.1"/>
</dbReference>
<dbReference type="SMR" id="A4TNP2"/>
<dbReference type="KEGG" id="ypp:YPDSF_2532"/>
<dbReference type="PATRIC" id="fig|386656.14.peg.4049"/>
<dbReference type="UniPathway" id="UPA00529">
    <property type="reaction ID" value="UER00385"/>
</dbReference>
<dbReference type="GO" id="GO:0016020">
    <property type="term" value="C:membrane"/>
    <property type="evidence" value="ECO:0007669"/>
    <property type="project" value="TreeGrafter"/>
</dbReference>
<dbReference type="GO" id="GO:0008802">
    <property type="term" value="F:betaine-aldehyde dehydrogenase (NAD+) activity"/>
    <property type="evidence" value="ECO:0007669"/>
    <property type="project" value="UniProtKB-EC"/>
</dbReference>
<dbReference type="GO" id="GO:0008812">
    <property type="term" value="F:choline dehydrogenase activity"/>
    <property type="evidence" value="ECO:0007669"/>
    <property type="project" value="UniProtKB-UniRule"/>
</dbReference>
<dbReference type="GO" id="GO:0050660">
    <property type="term" value="F:flavin adenine dinucleotide binding"/>
    <property type="evidence" value="ECO:0007669"/>
    <property type="project" value="InterPro"/>
</dbReference>
<dbReference type="GO" id="GO:0019285">
    <property type="term" value="P:glycine betaine biosynthetic process from choline"/>
    <property type="evidence" value="ECO:0007669"/>
    <property type="project" value="UniProtKB-UniRule"/>
</dbReference>
<dbReference type="Gene3D" id="3.50.50.60">
    <property type="entry name" value="FAD/NAD(P)-binding domain"/>
    <property type="match status" value="1"/>
</dbReference>
<dbReference type="Gene3D" id="3.30.560.10">
    <property type="entry name" value="Glucose Oxidase, domain 3"/>
    <property type="match status" value="1"/>
</dbReference>
<dbReference type="HAMAP" id="MF_00750">
    <property type="entry name" value="Choline_dehydrogen"/>
    <property type="match status" value="1"/>
</dbReference>
<dbReference type="InterPro" id="IPR011533">
    <property type="entry name" value="BetA"/>
</dbReference>
<dbReference type="InterPro" id="IPR036188">
    <property type="entry name" value="FAD/NAD-bd_sf"/>
</dbReference>
<dbReference type="InterPro" id="IPR012132">
    <property type="entry name" value="GMC_OxRdtase"/>
</dbReference>
<dbReference type="InterPro" id="IPR000172">
    <property type="entry name" value="GMC_OxRdtase_N"/>
</dbReference>
<dbReference type="InterPro" id="IPR007867">
    <property type="entry name" value="GMC_OxRtase_C"/>
</dbReference>
<dbReference type="NCBIfam" id="TIGR01810">
    <property type="entry name" value="betA"/>
    <property type="match status" value="1"/>
</dbReference>
<dbReference type="NCBIfam" id="NF002550">
    <property type="entry name" value="PRK02106.1"/>
    <property type="match status" value="1"/>
</dbReference>
<dbReference type="PANTHER" id="PTHR11552:SF147">
    <property type="entry name" value="CHOLINE DEHYDROGENASE, MITOCHONDRIAL"/>
    <property type="match status" value="1"/>
</dbReference>
<dbReference type="PANTHER" id="PTHR11552">
    <property type="entry name" value="GLUCOSE-METHANOL-CHOLINE GMC OXIDOREDUCTASE"/>
    <property type="match status" value="1"/>
</dbReference>
<dbReference type="Pfam" id="PF05199">
    <property type="entry name" value="GMC_oxred_C"/>
    <property type="match status" value="1"/>
</dbReference>
<dbReference type="Pfam" id="PF00732">
    <property type="entry name" value="GMC_oxred_N"/>
    <property type="match status" value="1"/>
</dbReference>
<dbReference type="PIRSF" id="PIRSF000137">
    <property type="entry name" value="Alcohol_oxidase"/>
    <property type="match status" value="1"/>
</dbReference>
<dbReference type="SUPFAM" id="SSF54373">
    <property type="entry name" value="FAD-linked reductases, C-terminal domain"/>
    <property type="match status" value="1"/>
</dbReference>
<dbReference type="SUPFAM" id="SSF51905">
    <property type="entry name" value="FAD/NAD(P)-binding domain"/>
    <property type="match status" value="1"/>
</dbReference>
<dbReference type="PROSITE" id="PS00623">
    <property type="entry name" value="GMC_OXRED_1"/>
    <property type="match status" value="1"/>
</dbReference>
<dbReference type="PROSITE" id="PS00624">
    <property type="entry name" value="GMC_OXRED_2"/>
    <property type="match status" value="1"/>
</dbReference>
<comment type="function">
    <text evidence="1">Involved in the biosynthesis of the osmoprotectant glycine betaine. Catalyzes the oxidation of choline to betaine aldehyde and betaine aldehyde to glycine betaine at the same rate.</text>
</comment>
<comment type="catalytic activity">
    <reaction evidence="1">
        <text>choline + A = betaine aldehyde + AH2</text>
        <dbReference type="Rhea" id="RHEA:17433"/>
        <dbReference type="ChEBI" id="CHEBI:13193"/>
        <dbReference type="ChEBI" id="CHEBI:15354"/>
        <dbReference type="ChEBI" id="CHEBI:15710"/>
        <dbReference type="ChEBI" id="CHEBI:17499"/>
        <dbReference type="EC" id="1.1.99.1"/>
    </reaction>
</comment>
<comment type="catalytic activity">
    <reaction evidence="1">
        <text>betaine aldehyde + NAD(+) + H2O = glycine betaine + NADH + 2 H(+)</text>
        <dbReference type="Rhea" id="RHEA:15305"/>
        <dbReference type="ChEBI" id="CHEBI:15377"/>
        <dbReference type="ChEBI" id="CHEBI:15378"/>
        <dbReference type="ChEBI" id="CHEBI:15710"/>
        <dbReference type="ChEBI" id="CHEBI:17750"/>
        <dbReference type="ChEBI" id="CHEBI:57540"/>
        <dbReference type="ChEBI" id="CHEBI:57945"/>
        <dbReference type="EC" id="1.2.1.8"/>
    </reaction>
</comment>
<comment type="cofactor">
    <cofactor evidence="1">
        <name>FAD</name>
        <dbReference type="ChEBI" id="CHEBI:57692"/>
    </cofactor>
</comment>
<comment type="pathway">
    <text evidence="1">Amine and polyamine biosynthesis; betaine biosynthesis via choline pathway; betaine aldehyde from choline (cytochrome c reductase route): step 1/1.</text>
</comment>
<comment type="similarity">
    <text evidence="1">Belongs to the GMC oxidoreductase family.</text>
</comment>
<feature type="chain" id="PRO_1000046575" description="Oxygen-dependent choline dehydrogenase">
    <location>
        <begin position="1"/>
        <end position="567"/>
    </location>
</feature>
<feature type="active site" description="Proton acceptor" evidence="1">
    <location>
        <position position="473"/>
    </location>
</feature>
<feature type="binding site" evidence="1">
    <location>
        <begin position="4"/>
        <end position="33"/>
    </location>
    <ligand>
        <name>FAD</name>
        <dbReference type="ChEBI" id="CHEBI:57692"/>
    </ligand>
</feature>
<sequence length="567" mass="62492">MEYDYIIIGAGSAGNVLAARLTEDADVTVLLLEAGGPDYRLDFRTQMPAALAFPLQGKRYNWAYETDPEPHMNNRRMECGRGKGLGGSSLINGMCYIRGNAMDFDHWASLSGLEDWSYLDCLPYFRKAETRDIGPNDFHGGEGPVSVTTPKIGNNPLFHAMVAAGVQAGYPRTDDLNGYQQEGFGPMDRTVTPKGRRASTARGYLDQARPRNNLTIITHALTDRILFEGKRATGVRYLKGDAGTGQTAYARREVLLCGGAIASPQILQRSGIGPAELLQRLDIPLVQALPGVGENLQDHLEMYLQYSCKQPVSLYPALLWFNQPKIGIEWLFNGTGVGASNQFEAGGFIRSRDAFTWPNIQYHFLPVAINYNGSNAVKEHGFQAHVGSMRSPSRGRIQVKSKDPRQHPSILFNYMSSEQDWHEFRDAIRITREIIAQPALDPYRGREISPGANVQNDDELDAFIREHAETAYHPSCSCKMGDDKMAVVDGQGRVHGVQGLRVVDASIMSQIITGNLNATTIMIAEKIADRIRGCQPLAKSNAAYFIAGDTPARTSPVRHSLPVTSYP</sequence>